<name>AKT2_ORYSJ</name>
<dbReference type="EMBL" id="AC130600">
    <property type="protein sequence ID" value="AAV59417.1"/>
    <property type="status" value="ALT_SEQ"/>
    <property type="molecule type" value="Genomic_DNA"/>
</dbReference>
<dbReference type="EMBL" id="AC135429">
    <property type="protein sequence ID" value="AAS90668.1"/>
    <property type="molecule type" value="Genomic_DNA"/>
</dbReference>
<dbReference type="EMBL" id="AP008211">
    <property type="protein sequence ID" value="BAF17528.1"/>
    <property type="status" value="ALT_SEQ"/>
    <property type="molecule type" value="Genomic_DNA"/>
</dbReference>
<dbReference type="EMBL" id="AP014961">
    <property type="status" value="NOT_ANNOTATED_CDS"/>
    <property type="molecule type" value="Genomic_DNA"/>
</dbReference>
<dbReference type="EMBL" id="CM000142">
    <property type="protein sequence ID" value="EEE63802.1"/>
    <property type="molecule type" value="Genomic_DNA"/>
</dbReference>
<dbReference type="EMBL" id="AK061594">
    <property type="status" value="NOT_ANNOTATED_CDS"/>
    <property type="molecule type" value="mRNA"/>
</dbReference>
<dbReference type="RefSeq" id="XP_015637942.1">
    <property type="nucleotide sequence ID" value="XM_015782456.1"/>
</dbReference>
<dbReference type="SMR" id="Q75HP9"/>
<dbReference type="FunCoup" id="Q75HP9">
    <property type="interactions" value="741"/>
</dbReference>
<dbReference type="STRING" id="39947.Q75HP9"/>
<dbReference type="PaxDb" id="39947-Q75HP9"/>
<dbReference type="EnsemblPlants" id="Os05t0428700-01">
    <property type="protein sequence ID" value="Os05t0428700-01"/>
    <property type="gene ID" value="Os05g0428700"/>
</dbReference>
<dbReference type="Gramene" id="Os05t0428700-01">
    <property type="protein sequence ID" value="Os05t0428700-01"/>
    <property type="gene ID" value="Os05g0428700"/>
</dbReference>
<dbReference type="KEGG" id="dosa:Os05g0428700"/>
<dbReference type="eggNOG" id="KOG0498">
    <property type="taxonomic scope" value="Eukaryota"/>
</dbReference>
<dbReference type="HOGENOM" id="CLU_005746_8_3_1"/>
<dbReference type="InParanoid" id="Q75HP9"/>
<dbReference type="OrthoDB" id="426293at2759"/>
<dbReference type="Proteomes" id="UP000000763">
    <property type="component" value="Chromosome 5"/>
</dbReference>
<dbReference type="Proteomes" id="UP000007752">
    <property type="component" value="Chromosome 5"/>
</dbReference>
<dbReference type="Proteomes" id="UP000059680">
    <property type="component" value="Chromosome 5"/>
</dbReference>
<dbReference type="GO" id="GO:0005789">
    <property type="term" value="C:endoplasmic reticulum membrane"/>
    <property type="evidence" value="ECO:0007669"/>
    <property type="project" value="EnsemblPlants"/>
</dbReference>
<dbReference type="GO" id="GO:0034702">
    <property type="term" value="C:monoatomic ion channel complex"/>
    <property type="evidence" value="ECO:0007669"/>
    <property type="project" value="UniProtKB-KW"/>
</dbReference>
<dbReference type="GO" id="GO:0042802">
    <property type="term" value="F:identical protein binding"/>
    <property type="evidence" value="ECO:0007669"/>
    <property type="project" value="EnsemblPlants"/>
</dbReference>
<dbReference type="GO" id="GO:0005249">
    <property type="term" value="F:voltage-gated potassium channel activity"/>
    <property type="evidence" value="ECO:0007669"/>
    <property type="project" value="InterPro"/>
</dbReference>
<dbReference type="GO" id="GO:0042391">
    <property type="term" value="P:regulation of membrane potential"/>
    <property type="evidence" value="ECO:0007669"/>
    <property type="project" value="EnsemblPlants"/>
</dbReference>
<dbReference type="GO" id="GO:0009737">
    <property type="term" value="P:response to abscisic acid"/>
    <property type="evidence" value="ECO:0007669"/>
    <property type="project" value="EnsemblPlants"/>
</dbReference>
<dbReference type="CDD" id="cd00038">
    <property type="entry name" value="CAP_ED"/>
    <property type="match status" value="1"/>
</dbReference>
<dbReference type="FunFam" id="2.60.120.10:FF:000074">
    <property type="entry name" value="Potassium channel KAT2"/>
    <property type="match status" value="1"/>
</dbReference>
<dbReference type="FunFam" id="1.10.287.70:FF:000123">
    <property type="entry name" value="Potassium channel KAT3"/>
    <property type="match status" value="1"/>
</dbReference>
<dbReference type="Gene3D" id="1.10.287.70">
    <property type="match status" value="1"/>
</dbReference>
<dbReference type="Gene3D" id="1.25.40.20">
    <property type="entry name" value="Ankyrin repeat-containing domain"/>
    <property type="match status" value="2"/>
</dbReference>
<dbReference type="Gene3D" id="2.60.120.10">
    <property type="entry name" value="Jelly Rolls"/>
    <property type="match status" value="1"/>
</dbReference>
<dbReference type="InterPro" id="IPR002110">
    <property type="entry name" value="Ankyrin_rpt"/>
</dbReference>
<dbReference type="InterPro" id="IPR036770">
    <property type="entry name" value="Ankyrin_rpt-contain_sf"/>
</dbReference>
<dbReference type="InterPro" id="IPR000595">
    <property type="entry name" value="cNMP-bd_dom"/>
</dbReference>
<dbReference type="InterPro" id="IPR018490">
    <property type="entry name" value="cNMP-bd_dom_sf"/>
</dbReference>
<dbReference type="InterPro" id="IPR005821">
    <property type="entry name" value="Ion_trans_dom"/>
</dbReference>
<dbReference type="InterPro" id="IPR003938">
    <property type="entry name" value="K_chnl_volt-dep_EAG/ELK/ERG"/>
</dbReference>
<dbReference type="InterPro" id="IPR045319">
    <property type="entry name" value="KAT/AKT"/>
</dbReference>
<dbReference type="InterPro" id="IPR021789">
    <property type="entry name" value="KHA_dom"/>
</dbReference>
<dbReference type="InterPro" id="IPR014710">
    <property type="entry name" value="RmlC-like_jellyroll"/>
</dbReference>
<dbReference type="PANTHER" id="PTHR45743">
    <property type="entry name" value="POTASSIUM CHANNEL AKT1"/>
    <property type="match status" value="1"/>
</dbReference>
<dbReference type="PANTHER" id="PTHR45743:SF21">
    <property type="entry name" value="POTASSIUM CHANNEL AKT2_3"/>
    <property type="match status" value="1"/>
</dbReference>
<dbReference type="Pfam" id="PF12796">
    <property type="entry name" value="Ank_2"/>
    <property type="match status" value="2"/>
</dbReference>
<dbReference type="Pfam" id="PF00027">
    <property type="entry name" value="cNMP_binding"/>
    <property type="match status" value="1"/>
</dbReference>
<dbReference type="Pfam" id="PF00520">
    <property type="entry name" value="Ion_trans"/>
    <property type="match status" value="1"/>
</dbReference>
<dbReference type="Pfam" id="PF11834">
    <property type="entry name" value="KHA"/>
    <property type="match status" value="1"/>
</dbReference>
<dbReference type="PRINTS" id="PR01463">
    <property type="entry name" value="EAGCHANLFMLY"/>
</dbReference>
<dbReference type="SMART" id="SM00248">
    <property type="entry name" value="ANK"/>
    <property type="match status" value="5"/>
</dbReference>
<dbReference type="SMART" id="SM00100">
    <property type="entry name" value="cNMP"/>
    <property type="match status" value="1"/>
</dbReference>
<dbReference type="SUPFAM" id="SSF48403">
    <property type="entry name" value="Ankyrin repeat"/>
    <property type="match status" value="1"/>
</dbReference>
<dbReference type="SUPFAM" id="SSF51206">
    <property type="entry name" value="cAMP-binding domain-like"/>
    <property type="match status" value="1"/>
</dbReference>
<dbReference type="SUPFAM" id="SSF81324">
    <property type="entry name" value="Voltage-gated potassium channels"/>
    <property type="match status" value="1"/>
</dbReference>
<dbReference type="PROSITE" id="PS50297">
    <property type="entry name" value="ANK_REP_REGION"/>
    <property type="match status" value="1"/>
</dbReference>
<dbReference type="PROSITE" id="PS50088">
    <property type="entry name" value="ANK_REPEAT"/>
    <property type="match status" value="2"/>
</dbReference>
<dbReference type="PROSITE" id="PS50042">
    <property type="entry name" value="CNMP_BINDING_3"/>
    <property type="match status" value="1"/>
</dbReference>
<dbReference type="PROSITE" id="PS51490">
    <property type="entry name" value="KHA"/>
    <property type="match status" value="1"/>
</dbReference>
<proteinExistence type="evidence at transcript level"/>
<keyword id="KW-0040">ANK repeat</keyword>
<keyword id="KW-0407">Ion channel</keyword>
<keyword id="KW-0406">Ion transport</keyword>
<keyword id="KW-0472">Membrane</keyword>
<keyword id="KW-0630">Potassium</keyword>
<keyword id="KW-0631">Potassium channel</keyword>
<keyword id="KW-0633">Potassium transport</keyword>
<keyword id="KW-1185">Reference proteome</keyword>
<keyword id="KW-0677">Repeat</keyword>
<keyword id="KW-0812">Transmembrane</keyword>
<keyword id="KW-1133">Transmembrane helix</keyword>
<keyword id="KW-0813">Transport</keyword>
<keyword id="KW-0851">Voltage-gated channel</keyword>
<evidence type="ECO:0000250" key="1"/>
<evidence type="ECO:0000255" key="2"/>
<evidence type="ECO:0000255" key="3">
    <source>
        <dbReference type="PROSITE-ProRule" id="PRU00823"/>
    </source>
</evidence>
<evidence type="ECO:0000256" key="4">
    <source>
        <dbReference type="SAM" id="MobiDB-lite"/>
    </source>
</evidence>
<evidence type="ECO:0000305" key="5"/>
<gene>
    <name type="ordered locus">Os05g0428700</name>
    <name type="ordered locus">LOC_Os05g35410</name>
    <name type="ORF">OsJ_18626</name>
    <name type="ORF">OSJNBb0048I21.3</name>
    <name type="ORF">P0636F09.19</name>
</gene>
<feature type="chain" id="PRO_0000410875" description="Potassium channel AKT2">
    <location>
        <begin position="1"/>
        <end position="855"/>
    </location>
</feature>
<feature type="topological domain" description="Cytoplasmic" evidence="2">
    <location>
        <begin position="1"/>
        <end position="75"/>
    </location>
</feature>
<feature type="transmembrane region" description="Helical; Name=Segment S1" evidence="2">
    <location>
        <begin position="76"/>
        <end position="96"/>
    </location>
</feature>
<feature type="topological domain" description="Extracellular" evidence="2">
    <location>
        <begin position="97"/>
        <end position="105"/>
    </location>
</feature>
<feature type="transmembrane region" description="Helical; Name=Segment S2" evidence="2">
    <location>
        <begin position="106"/>
        <end position="126"/>
    </location>
</feature>
<feature type="topological domain" description="Cytoplasmic" evidence="2">
    <location>
        <begin position="127"/>
        <end position="149"/>
    </location>
</feature>
<feature type="transmembrane region" description="Helical" evidence="2">
    <location>
        <begin position="150"/>
        <end position="170"/>
    </location>
</feature>
<feature type="topological domain" description="Extracellular" evidence="2">
    <location>
        <begin position="171"/>
        <end position="179"/>
    </location>
</feature>
<feature type="transmembrane region" description="Helical; Voltage-sensor; Name=Segment S4" evidence="2">
    <location>
        <begin position="180"/>
        <end position="200"/>
    </location>
</feature>
<feature type="topological domain" description="Cytoplasmic" evidence="2">
    <location>
        <begin position="201"/>
        <end position="214"/>
    </location>
</feature>
<feature type="transmembrane region" description="Helical" evidence="1">
    <location>
        <begin position="215"/>
        <end position="235"/>
    </location>
</feature>
<feature type="topological domain" description="Extracellular" evidence="2">
    <location>
        <begin position="236"/>
        <end position="262"/>
    </location>
</feature>
<feature type="intramembrane region" description="Pore-forming; Name=Segment H5" evidence="1">
    <location>
        <begin position="263"/>
        <end position="282"/>
    </location>
</feature>
<feature type="topological domain" description="Extracellular" evidence="2">
    <location>
        <begin position="283"/>
        <end position="285"/>
    </location>
</feature>
<feature type="transmembrane region" description="Helical; Name=Segment S6" evidence="2">
    <location>
        <begin position="286"/>
        <end position="306"/>
    </location>
</feature>
<feature type="topological domain" description="Cytoplasmic" evidence="2">
    <location>
        <begin position="307"/>
        <end position="855"/>
    </location>
</feature>
<feature type="repeat" description="ANK 1">
    <location>
        <begin position="536"/>
        <end position="565"/>
    </location>
</feature>
<feature type="repeat" description="ANK 2">
    <location>
        <begin position="569"/>
        <end position="598"/>
    </location>
</feature>
<feature type="repeat" description="ANK 3">
    <location>
        <begin position="602"/>
        <end position="631"/>
    </location>
</feature>
<feature type="repeat" description="ANK 4">
    <location>
        <begin position="634"/>
        <end position="663"/>
    </location>
</feature>
<feature type="repeat" description="ANK 5">
    <location>
        <begin position="667"/>
        <end position="696"/>
    </location>
</feature>
<feature type="domain" description="KHA" evidence="3">
    <location>
        <begin position="768"/>
        <end position="855"/>
    </location>
</feature>
<feature type="region of interest" description="Disordered" evidence="4">
    <location>
        <begin position="1"/>
        <end position="24"/>
    </location>
</feature>
<feature type="region of interest" description="Disordered" evidence="4">
    <location>
        <begin position="744"/>
        <end position="765"/>
    </location>
</feature>
<feature type="compositionally biased region" description="Low complexity" evidence="4">
    <location>
        <begin position="1"/>
        <end position="12"/>
    </location>
</feature>
<feature type="compositionally biased region" description="Gly residues" evidence="4">
    <location>
        <begin position="13"/>
        <end position="24"/>
    </location>
</feature>
<feature type="binding site">
    <location>
        <begin position="391"/>
        <end position="511"/>
    </location>
    <ligand>
        <name>a nucleoside 3',5'-cyclic phosphate</name>
        <dbReference type="ChEBI" id="CHEBI:58464"/>
    </ligand>
</feature>
<comment type="function">
    <text evidence="1">Probable inward-rectifying potassium channel. Assuming opened or closed conformations in response to the voltage difference across the membrane, the channel is activated by hyperpolarization (By similarity).</text>
</comment>
<comment type="subunit">
    <text evidence="1">The potassium channel is probably a homo- or heterotetrameric complex of pore-forming subunits.</text>
</comment>
<comment type="subcellular location">
    <subcellularLocation>
        <location evidence="5">Membrane</location>
        <topology evidence="5">Multi-pass membrane protein</topology>
    </subcellularLocation>
</comment>
<comment type="domain">
    <text evidence="1">The segment S4 is probably the voltage-sensor and is characterized by a series of positively charged amino acids. The pore-forming region H5 is enclosed by the transmembrane segments S5 and S6 in the Shaker-type (1P/6TM) and contains the GYGD signature motif which seems to be involved in potassium selectivity (By similarity).</text>
</comment>
<comment type="domain">
    <text evidence="1">The KHA domain (rich in hydrophobic and acidic residues) present in the C-terminal part is likely to be important for tetramerization.</text>
</comment>
<comment type="similarity">
    <text evidence="5">Belongs to the potassium channel family. Plant (TC 1.A.1.4) subfamily.</text>
</comment>
<comment type="sequence caution" evidence="5">
    <conflict type="erroneous gene model prediction">
        <sequence resource="EMBL-CDS" id="AAV59417"/>
    </conflict>
</comment>
<comment type="sequence caution" evidence="5">
    <conflict type="erroneous gene model prediction">
        <sequence resource="EMBL-CDS" id="BAF17528"/>
    </conflict>
</comment>
<reference key="1">
    <citation type="journal article" date="2005" name="Mol. Genet. Genomics">
        <title>A fine physical map of the rice chromosome 5.</title>
        <authorList>
            <person name="Cheng C.-H."/>
            <person name="Chung M.C."/>
            <person name="Liu S.-M."/>
            <person name="Chen S.-K."/>
            <person name="Kao F.Y."/>
            <person name="Lin S.-J."/>
            <person name="Hsiao S.-H."/>
            <person name="Tseng I.C."/>
            <person name="Hsing Y.-I.C."/>
            <person name="Wu H.-P."/>
            <person name="Chen C.-S."/>
            <person name="Shaw J.-F."/>
            <person name="Wu J."/>
            <person name="Matsumoto T."/>
            <person name="Sasaki T."/>
            <person name="Chen H.-C."/>
            <person name="Chow T.-Y."/>
        </authorList>
    </citation>
    <scope>NUCLEOTIDE SEQUENCE [LARGE SCALE GENOMIC DNA]</scope>
    <source>
        <strain>cv. Nipponbare</strain>
    </source>
</reference>
<reference key="2">
    <citation type="journal article" date="2005" name="Nature">
        <title>The map-based sequence of the rice genome.</title>
        <authorList>
            <consortium name="International rice genome sequencing project (IRGSP)"/>
        </authorList>
    </citation>
    <scope>NUCLEOTIDE SEQUENCE [LARGE SCALE GENOMIC DNA]</scope>
    <source>
        <strain>cv. Nipponbare</strain>
    </source>
</reference>
<reference key="3">
    <citation type="journal article" date="2008" name="Nucleic Acids Res.">
        <title>The rice annotation project database (RAP-DB): 2008 update.</title>
        <authorList>
            <consortium name="The rice annotation project (RAP)"/>
        </authorList>
    </citation>
    <scope>GENOME REANNOTATION</scope>
    <source>
        <strain>cv. Nipponbare</strain>
    </source>
</reference>
<reference key="4">
    <citation type="journal article" date="2013" name="Rice">
        <title>Improvement of the Oryza sativa Nipponbare reference genome using next generation sequence and optical map data.</title>
        <authorList>
            <person name="Kawahara Y."/>
            <person name="de la Bastide M."/>
            <person name="Hamilton J.P."/>
            <person name="Kanamori H."/>
            <person name="McCombie W.R."/>
            <person name="Ouyang S."/>
            <person name="Schwartz D.C."/>
            <person name="Tanaka T."/>
            <person name="Wu J."/>
            <person name="Zhou S."/>
            <person name="Childs K.L."/>
            <person name="Davidson R.M."/>
            <person name="Lin H."/>
            <person name="Quesada-Ocampo L."/>
            <person name="Vaillancourt B."/>
            <person name="Sakai H."/>
            <person name="Lee S.S."/>
            <person name="Kim J."/>
            <person name="Numa H."/>
            <person name="Itoh T."/>
            <person name="Buell C.R."/>
            <person name="Matsumoto T."/>
        </authorList>
    </citation>
    <scope>GENOME REANNOTATION</scope>
    <source>
        <strain>cv. Nipponbare</strain>
    </source>
</reference>
<reference key="5">
    <citation type="journal article" date="2005" name="PLoS Biol.">
        <title>The genomes of Oryza sativa: a history of duplications.</title>
        <authorList>
            <person name="Yu J."/>
            <person name="Wang J."/>
            <person name="Lin W."/>
            <person name="Li S."/>
            <person name="Li H."/>
            <person name="Zhou J."/>
            <person name="Ni P."/>
            <person name="Dong W."/>
            <person name="Hu S."/>
            <person name="Zeng C."/>
            <person name="Zhang J."/>
            <person name="Zhang Y."/>
            <person name="Li R."/>
            <person name="Xu Z."/>
            <person name="Li S."/>
            <person name="Li X."/>
            <person name="Zheng H."/>
            <person name="Cong L."/>
            <person name="Lin L."/>
            <person name="Yin J."/>
            <person name="Geng J."/>
            <person name="Li G."/>
            <person name="Shi J."/>
            <person name="Liu J."/>
            <person name="Lv H."/>
            <person name="Li J."/>
            <person name="Wang J."/>
            <person name="Deng Y."/>
            <person name="Ran L."/>
            <person name="Shi X."/>
            <person name="Wang X."/>
            <person name="Wu Q."/>
            <person name="Li C."/>
            <person name="Ren X."/>
            <person name="Wang J."/>
            <person name="Wang X."/>
            <person name="Li D."/>
            <person name="Liu D."/>
            <person name="Zhang X."/>
            <person name="Ji Z."/>
            <person name="Zhao W."/>
            <person name="Sun Y."/>
            <person name="Zhang Z."/>
            <person name="Bao J."/>
            <person name="Han Y."/>
            <person name="Dong L."/>
            <person name="Ji J."/>
            <person name="Chen P."/>
            <person name="Wu S."/>
            <person name="Liu J."/>
            <person name="Xiao Y."/>
            <person name="Bu D."/>
            <person name="Tan J."/>
            <person name="Yang L."/>
            <person name="Ye C."/>
            <person name="Zhang J."/>
            <person name="Xu J."/>
            <person name="Zhou Y."/>
            <person name="Yu Y."/>
            <person name="Zhang B."/>
            <person name="Zhuang S."/>
            <person name="Wei H."/>
            <person name="Liu B."/>
            <person name="Lei M."/>
            <person name="Yu H."/>
            <person name="Li Y."/>
            <person name="Xu H."/>
            <person name="Wei S."/>
            <person name="He X."/>
            <person name="Fang L."/>
            <person name="Zhang Z."/>
            <person name="Zhang Y."/>
            <person name="Huang X."/>
            <person name="Su Z."/>
            <person name="Tong W."/>
            <person name="Li J."/>
            <person name="Tong Z."/>
            <person name="Li S."/>
            <person name="Ye J."/>
            <person name="Wang L."/>
            <person name="Fang L."/>
            <person name="Lei T."/>
            <person name="Chen C.-S."/>
            <person name="Chen H.-C."/>
            <person name="Xu Z."/>
            <person name="Li H."/>
            <person name="Huang H."/>
            <person name="Zhang F."/>
            <person name="Xu H."/>
            <person name="Li N."/>
            <person name="Zhao C."/>
            <person name="Li S."/>
            <person name="Dong L."/>
            <person name="Huang Y."/>
            <person name="Li L."/>
            <person name="Xi Y."/>
            <person name="Qi Q."/>
            <person name="Li W."/>
            <person name="Zhang B."/>
            <person name="Hu W."/>
            <person name="Zhang Y."/>
            <person name="Tian X."/>
            <person name="Jiao Y."/>
            <person name="Liang X."/>
            <person name="Jin J."/>
            <person name="Gao L."/>
            <person name="Zheng W."/>
            <person name="Hao B."/>
            <person name="Liu S.-M."/>
            <person name="Wang W."/>
            <person name="Yuan L."/>
            <person name="Cao M."/>
            <person name="McDermott J."/>
            <person name="Samudrala R."/>
            <person name="Wang J."/>
            <person name="Wong G.K.-S."/>
            <person name="Yang H."/>
        </authorList>
    </citation>
    <scope>NUCLEOTIDE SEQUENCE [LARGE SCALE GENOMIC DNA]</scope>
    <source>
        <strain>cv. Nipponbare</strain>
    </source>
</reference>
<reference key="6">
    <citation type="journal article" date="2003" name="Science">
        <title>Collection, mapping, and annotation of over 28,000 cDNA clones from japonica rice.</title>
        <authorList>
            <consortium name="The rice full-length cDNA consortium"/>
        </authorList>
    </citation>
    <scope>NUCLEOTIDE SEQUENCE [LARGE SCALE MRNA] OF 290-855</scope>
    <source>
        <strain>cv. Nipponbare</strain>
    </source>
</reference>
<organism>
    <name type="scientific">Oryza sativa subsp. japonica</name>
    <name type="common">Rice</name>
    <dbReference type="NCBI Taxonomy" id="39947"/>
    <lineage>
        <taxon>Eukaryota</taxon>
        <taxon>Viridiplantae</taxon>
        <taxon>Streptophyta</taxon>
        <taxon>Embryophyta</taxon>
        <taxon>Tracheophyta</taxon>
        <taxon>Spermatophyta</taxon>
        <taxon>Magnoliopsida</taxon>
        <taxon>Liliopsida</taxon>
        <taxon>Poales</taxon>
        <taxon>Poaceae</taxon>
        <taxon>BOP clade</taxon>
        <taxon>Oryzoideae</taxon>
        <taxon>Oryzeae</taxon>
        <taxon>Oryzinae</taxon>
        <taxon>Oryza</taxon>
        <taxon>Oryza sativa</taxon>
    </lineage>
</organism>
<sequence length="855" mass="94784">MKTSSFESASSSGGSGGGGGGGGGEGSGSFNLRNLSKLILPPLGVPAGGHAQSGHAGPNDRRVISPLDSRYRCWDTFMVVLVAYSAWVYPFEVAFMNASPKGGLEVADIVVDLFFAVDIVLTFFVAYIDSRTQLLVRDRRRIATRYLSTFFIMDVASTIPFQGLAYIVTGEVRESPAFSLLGILRLWRLRKVKQFFTRLEKDIRFNYFWIRCARLIAVTLFLVHCAGCLYYLIADRYPHREKTWIGAVIPDFQEASLWIRYTSSVYWSITTMTTVGYGDMHAQNTVEMIFNIFYMLFNLGLTAYLIGNMTNLVVEGTRRTMEFRNSIRAASNFVGRNHLPPRLKQQILAYMCLKFRAESLNQQQLMDQLPKSICKGICEYLFLPVVKDVYLFKGVSREVLLLMVTKMKPEYIPPKEDVIVQNEAPDDVYIVVSGEVEVIYSDGEAEERVVATLGTRGVFGEVSALSDRPQSFTLRTRTLCQLLRLRQAALKEAMQSKPEDSVVIIKNFLKHQIEMHDMKVEDLLGEDAAGEYDHGNIPCNLLTVAATGNSSFLEDLLKVGMDPDVGDSKGRTALHIAASKGYEDCVLVLLKQACNVNIKDAQGNTALWNAIAARHHKIFNILYHFARVSSPHHAAGDLLCLAARRGDLDTLRELLKHGLAVDSEDRDGATALRVALAEGHADVARLLVLNGASVDRAASHNEQQAAAAVSVDELRELMKTRELAHPVTIVVDSPSPAAAAVIREVGSSGDSRNGRRQSARSDGAHWPRVSIYRGHPFVRNRSSEAGKLINLPGTMEEFRIIIEEKLKVDARKTLIMNDEGAEIDSIDVIRDNDKLFIVTEEHMTAVASMDSVSGS</sequence>
<accession>Q75HP9</accession>
<accession>Q0DHZ5</accession>
<accession>Q5TKJ4</accession>
<protein>
    <recommendedName>
        <fullName>Potassium channel AKT2</fullName>
    </recommendedName>
</protein>